<comment type="function">
    <text>Sigma factors are initiation factors that promote the attachment of RNA polymerase to specific initiation sites and are then released. This sigma factor is involved in the transition to post-exponential phase in the beginning of sporulation.</text>
</comment>
<comment type="similarity">
    <text evidence="2">Belongs to the sigma-70 factor family.</text>
</comment>
<comment type="sequence caution" evidence="2">
    <conflict type="miscellaneous discrepancy">
        <sequence resource="EMBL-CDS" id="CAA25119"/>
    </conflict>
</comment>
<organism>
    <name type="scientific">Bacillus licheniformis</name>
    <dbReference type="NCBI Taxonomy" id="1402"/>
    <lineage>
        <taxon>Bacteria</taxon>
        <taxon>Bacillati</taxon>
        <taxon>Bacillota</taxon>
        <taxon>Bacilli</taxon>
        <taxon>Bacillales</taxon>
        <taxon>Bacillaceae</taxon>
        <taxon>Bacillus</taxon>
    </lineage>
</organism>
<sequence>MNLQNNQGKFSKEQFSKERFCQLEDEQVIEMVHVGDSDALDYLITKYRNFVRAKARSYFLIGADREDIVQEGMIGLYKSIRDFREDKLTSFKAFAELCITRQIITAIKTATRQKHIPLNSYVSLDKPIYDEESDRTLLDVISGAKVMNPEELIINQEEFDDIELKMGELLSDLERKVLALYLDGRSYQEISEELNRHVKSIDNALQRVKRKLEKYLELREISL</sequence>
<feature type="chain" id="PRO_0000093948" description="RNA polymerase sigma-H factor">
    <location>
        <begin position="1"/>
        <end position="223"/>
    </location>
</feature>
<feature type="DNA-binding region" description="H-T-H motif" evidence="1">
    <location>
        <begin position="187"/>
        <end position="206"/>
    </location>
</feature>
<feature type="short sequence motif" description="Polymerase core binding">
    <location>
        <begin position="67"/>
        <end position="80"/>
    </location>
</feature>
<accession>P02964</accession>
<accession>P11702</accession>
<reference key="1">
    <citation type="journal article" date="1988" name="J. Bacteriol.">
        <title>Bacillus sporulation gene spo0H codes for sigma 30 (sigma H).</title>
        <authorList>
            <person name="Dubnau E."/>
            <person name="Weir J."/>
            <person name="Nair G."/>
            <person name="Carter L. III"/>
            <person name="Moran C.P. Jr."/>
            <person name="Smith I."/>
        </authorList>
    </citation>
    <scope>NUCLEOTIDE SEQUENCE [GENOMIC DNA]</scope>
</reference>
<reference key="2">
    <citation type="journal article" date="1984" name="Nucleic Acids Res.">
        <title>The complete DNA sequence and regulatory regions of the Bacillus licheniformis spoOH gene.</title>
        <authorList>
            <person name="Ramakrishna N."/>
            <person name="Dubnau E."/>
            <person name="Smith I."/>
        </authorList>
    </citation>
    <scope>NUCLEOTIDE SEQUENCE [GENOMIC DNA]</scope>
    <source>
        <strain>FD02</strain>
    </source>
</reference>
<evidence type="ECO:0000250" key="1"/>
<evidence type="ECO:0000305" key="2"/>
<proteinExistence type="inferred from homology"/>
<keyword id="KW-0238">DNA-binding</keyword>
<keyword id="KW-0731">Sigma factor</keyword>
<keyword id="KW-0749">Sporulation</keyword>
<keyword id="KW-0804">Transcription</keyword>
<keyword id="KW-0805">Transcription regulation</keyword>
<gene>
    <name type="primary">sigH</name>
    <name type="synonym">spo0H</name>
</gene>
<name>RPSH_BACLI</name>
<protein>
    <recommendedName>
        <fullName>RNA polymerase sigma-H factor</fullName>
    </recommendedName>
    <alternativeName>
        <fullName>Sigma-30</fullName>
    </alternativeName>
</protein>
<dbReference type="EMBL" id="M29694">
    <property type="protein sequence ID" value="AAA22755.1"/>
    <property type="molecule type" value="Genomic_DNA"/>
</dbReference>
<dbReference type="EMBL" id="X00413">
    <property type="protein sequence ID" value="CAA25119.1"/>
    <property type="status" value="ALT_SEQ"/>
    <property type="molecule type" value="Genomic_DNA"/>
</dbReference>
<dbReference type="PIR" id="B28625">
    <property type="entry name" value="SZBSSL"/>
</dbReference>
<dbReference type="RefSeq" id="WP_003178288.1">
    <property type="nucleotide sequence ID" value="NZ_VEGU01000020.1"/>
</dbReference>
<dbReference type="SMR" id="P02964"/>
<dbReference type="GeneID" id="92858920"/>
<dbReference type="PATRIC" id="fig|1402.62.peg.2010"/>
<dbReference type="OMA" id="WKVLMSY"/>
<dbReference type="GO" id="GO:0003677">
    <property type="term" value="F:DNA binding"/>
    <property type="evidence" value="ECO:0007669"/>
    <property type="project" value="UniProtKB-KW"/>
</dbReference>
<dbReference type="GO" id="GO:0016987">
    <property type="term" value="F:sigma factor activity"/>
    <property type="evidence" value="ECO:0007669"/>
    <property type="project" value="UniProtKB-KW"/>
</dbReference>
<dbReference type="GO" id="GO:0006352">
    <property type="term" value="P:DNA-templated transcription initiation"/>
    <property type="evidence" value="ECO:0007669"/>
    <property type="project" value="InterPro"/>
</dbReference>
<dbReference type="GO" id="GO:0030435">
    <property type="term" value="P:sporulation resulting in formation of a cellular spore"/>
    <property type="evidence" value="ECO:0007669"/>
    <property type="project" value="UniProtKB-KW"/>
</dbReference>
<dbReference type="Gene3D" id="1.20.120.1810">
    <property type="match status" value="1"/>
</dbReference>
<dbReference type="Gene3D" id="1.10.10.10">
    <property type="entry name" value="Winged helix-like DNA-binding domain superfamily/Winged helix DNA-binding domain"/>
    <property type="match status" value="1"/>
</dbReference>
<dbReference type="InterPro" id="IPR014284">
    <property type="entry name" value="RNA_pol_sigma-70_dom"/>
</dbReference>
<dbReference type="InterPro" id="IPR014218">
    <property type="entry name" value="RNA_pol_sigma-H"/>
</dbReference>
<dbReference type="InterPro" id="IPR016371">
    <property type="entry name" value="RNA_pol_sigma-H_factor"/>
</dbReference>
<dbReference type="InterPro" id="IPR000943">
    <property type="entry name" value="RNA_pol_sigma70"/>
</dbReference>
<dbReference type="InterPro" id="IPR007627">
    <property type="entry name" value="RNA_pol_sigma70_r2"/>
</dbReference>
<dbReference type="InterPro" id="IPR013249">
    <property type="entry name" value="RNA_pol_sigma70_r4_t2"/>
</dbReference>
<dbReference type="InterPro" id="IPR013325">
    <property type="entry name" value="RNA_pol_sigma_r2"/>
</dbReference>
<dbReference type="InterPro" id="IPR013324">
    <property type="entry name" value="RNA_pol_sigma_r3/r4-like"/>
</dbReference>
<dbReference type="InterPro" id="IPR000792">
    <property type="entry name" value="Tscrpt_reg_LuxR_C"/>
</dbReference>
<dbReference type="InterPro" id="IPR036388">
    <property type="entry name" value="WH-like_DNA-bd_sf"/>
</dbReference>
<dbReference type="NCBIfam" id="NF006145">
    <property type="entry name" value="PRK08295.1-2"/>
    <property type="match status" value="1"/>
</dbReference>
<dbReference type="NCBIfam" id="NF006147">
    <property type="entry name" value="PRK08295.1-4"/>
    <property type="match status" value="1"/>
</dbReference>
<dbReference type="NCBIfam" id="NF006148">
    <property type="entry name" value="PRK08295.1-5"/>
    <property type="match status" value="1"/>
</dbReference>
<dbReference type="NCBIfam" id="TIGR02937">
    <property type="entry name" value="sigma70-ECF"/>
    <property type="match status" value="1"/>
</dbReference>
<dbReference type="NCBIfam" id="TIGR02859">
    <property type="entry name" value="spore_sigH"/>
    <property type="match status" value="1"/>
</dbReference>
<dbReference type="PANTHER" id="PTHR30385:SF1">
    <property type="entry name" value="RNA POLYMERASE SIGMA-H FACTOR"/>
    <property type="match status" value="1"/>
</dbReference>
<dbReference type="PANTHER" id="PTHR30385">
    <property type="entry name" value="SIGMA FACTOR F FLAGELLAR"/>
    <property type="match status" value="1"/>
</dbReference>
<dbReference type="Pfam" id="PF04542">
    <property type="entry name" value="Sigma70_r2"/>
    <property type="match status" value="1"/>
</dbReference>
<dbReference type="Pfam" id="PF08281">
    <property type="entry name" value="Sigma70_r4_2"/>
    <property type="match status" value="1"/>
</dbReference>
<dbReference type="PIRSF" id="PIRSF002939">
    <property type="entry name" value="RNA_polymerase_sigma-H_factor"/>
    <property type="match status" value="1"/>
</dbReference>
<dbReference type="SUPFAM" id="SSF88946">
    <property type="entry name" value="Sigma2 domain of RNA polymerase sigma factors"/>
    <property type="match status" value="1"/>
</dbReference>
<dbReference type="SUPFAM" id="SSF88659">
    <property type="entry name" value="Sigma3 and sigma4 domains of RNA polymerase sigma factors"/>
    <property type="match status" value="1"/>
</dbReference>
<dbReference type="PROSITE" id="PS00715">
    <property type="entry name" value="SIGMA70_1"/>
    <property type="match status" value="1"/>
</dbReference>